<comment type="function">
    <text evidence="1">Cell division factor that enhances FtsZ-ring assembly. Directly interacts with FtsZ and promotes bundling of FtsZ protofilaments, with a reduction in FtsZ GTPase activity.</text>
</comment>
<comment type="subunit">
    <text evidence="1">Interacts with FtsZ.</text>
</comment>
<comment type="subcellular location">
    <subcellularLocation>
        <location evidence="1">Cytoplasm</location>
    </subcellularLocation>
    <text evidence="1">Localizes to mid-cell in an FtsZ-dependent manner.</text>
</comment>
<comment type="similarity">
    <text evidence="1">Belongs to the ZapD family.</text>
</comment>
<accession>C6DET1</accession>
<reference key="1">
    <citation type="submission" date="2009-07" db="EMBL/GenBank/DDBJ databases">
        <title>Complete sequence of Pectobacterium carotovorum subsp. carotovorum PC1.</title>
        <authorList>
            <consortium name="US DOE Joint Genome Institute"/>
            <person name="Lucas S."/>
            <person name="Copeland A."/>
            <person name="Lapidus A."/>
            <person name="Glavina del Rio T."/>
            <person name="Tice H."/>
            <person name="Bruce D."/>
            <person name="Goodwin L."/>
            <person name="Pitluck S."/>
            <person name="Munk A.C."/>
            <person name="Brettin T."/>
            <person name="Detter J.C."/>
            <person name="Han C."/>
            <person name="Tapia R."/>
            <person name="Larimer F."/>
            <person name="Land M."/>
            <person name="Hauser L."/>
            <person name="Kyrpides N."/>
            <person name="Mikhailova N."/>
            <person name="Balakrishnan V."/>
            <person name="Glasner J."/>
            <person name="Perna N.T."/>
        </authorList>
    </citation>
    <scope>NUCLEOTIDE SEQUENCE [LARGE SCALE GENOMIC DNA]</scope>
    <source>
        <strain>PC1</strain>
    </source>
</reference>
<gene>
    <name evidence="1" type="primary">zapD</name>
    <name type="ordered locus">PC1_3580</name>
</gene>
<feature type="chain" id="PRO_1000213540" description="Cell division protein ZapD">
    <location>
        <begin position="1"/>
        <end position="250"/>
    </location>
</feature>
<sequence>MSDASSTILFEYPLNEKTRTWLRIESLLQQLHQNHSLTDMGSALTFFRAIAELLDVLERGDVRTELLKELERQQQKLLQWSDVPGVDMERIHTLRRQLKDLASTLMAAPRMGQFLREDRLIGMVRQRLGIPGGCCSFDLPTLHSWLHQPQELREKLVSGWLSSLSPLKQALDMILELIRHSGIFRPQISLNGFFQDNASDADLLRLRLEQAHQLYPQISGHKTRYAIRFLPLDSENGHIPPRLTFELACC</sequence>
<proteinExistence type="inferred from homology"/>
<protein>
    <recommendedName>
        <fullName evidence="1">Cell division protein ZapD</fullName>
    </recommendedName>
    <alternativeName>
        <fullName evidence="1">Z ring-associated protein D</fullName>
    </alternativeName>
</protein>
<organism>
    <name type="scientific">Pectobacterium carotovorum subsp. carotovorum (strain PC1)</name>
    <dbReference type="NCBI Taxonomy" id="561230"/>
    <lineage>
        <taxon>Bacteria</taxon>
        <taxon>Pseudomonadati</taxon>
        <taxon>Pseudomonadota</taxon>
        <taxon>Gammaproteobacteria</taxon>
        <taxon>Enterobacterales</taxon>
        <taxon>Pectobacteriaceae</taxon>
        <taxon>Pectobacterium</taxon>
    </lineage>
</organism>
<dbReference type="EMBL" id="CP001657">
    <property type="protein sequence ID" value="ACT14595.1"/>
    <property type="molecule type" value="Genomic_DNA"/>
</dbReference>
<dbReference type="RefSeq" id="WP_015841715.1">
    <property type="nucleotide sequence ID" value="NC_012917.1"/>
</dbReference>
<dbReference type="SMR" id="C6DET1"/>
<dbReference type="STRING" id="561230.PC1_3580"/>
<dbReference type="KEGG" id="pct:PC1_3580"/>
<dbReference type="eggNOG" id="COG4582">
    <property type="taxonomic scope" value="Bacteria"/>
</dbReference>
<dbReference type="HOGENOM" id="CLU_076303_0_0_6"/>
<dbReference type="OrthoDB" id="5294622at2"/>
<dbReference type="Proteomes" id="UP000002736">
    <property type="component" value="Chromosome"/>
</dbReference>
<dbReference type="GO" id="GO:0032153">
    <property type="term" value="C:cell division site"/>
    <property type="evidence" value="ECO:0007669"/>
    <property type="project" value="TreeGrafter"/>
</dbReference>
<dbReference type="GO" id="GO:0005737">
    <property type="term" value="C:cytoplasm"/>
    <property type="evidence" value="ECO:0007669"/>
    <property type="project" value="UniProtKB-SubCell"/>
</dbReference>
<dbReference type="GO" id="GO:0000917">
    <property type="term" value="P:division septum assembly"/>
    <property type="evidence" value="ECO:0007669"/>
    <property type="project" value="UniProtKB-KW"/>
</dbReference>
<dbReference type="GO" id="GO:0043093">
    <property type="term" value="P:FtsZ-dependent cytokinesis"/>
    <property type="evidence" value="ECO:0007669"/>
    <property type="project" value="UniProtKB-UniRule"/>
</dbReference>
<dbReference type="FunFam" id="2.60.440.10:FF:000001">
    <property type="entry name" value="Cell division protein ZapD"/>
    <property type="match status" value="1"/>
</dbReference>
<dbReference type="Gene3D" id="1.10.3900.10">
    <property type="entry name" value="YacF-like"/>
    <property type="match status" value="1"/>
</dbReference>
<dbReference type="Gene3D" id="2.60.440.10">
    <property type="entry name" value="YacF-like domains"/>
    <property type="match status" value="1"/>
</dbReference>
<dbReference type="HAMAP" id="MF_01092">
    <property type="entry name" value="ZapD"/>
    <property type="match status" value="1"/>
</dbReference>
<dbReference type="InterPro" id="IPR009777">
    <property type="entry name" value="ZapD"/>
</dbReference>
<dbReference type="InterPro" id="IPR027462">
    <property type="entry name" value="ZapD_C"/>
</dbReference>
<dbReference type="InterPro" id="IPR036268">
    <property type="entry name" value="ZapD_sf"/>
</dbReference>
<dbReference type="NCBIfam" id="NF003653">
    <property type="entry name" value="PRK05287.1-1"/>
    <property type="match status" value="1"/>
</dbReference>
<dbReference type="NCBIfam" id="NF003655">
    <property type="entry name" value="PRK05287.1-3"/>
    <property type="match status" value="1"/>
</dbReference>
<dbReference type="PANTHER" id="PTHR39455">
    <property type="entry name" value="CELL DIVISION PROTEIN ZAPD"/>
    <property type="match status" value="1"/>
</dbReference>
<dbReference type="PANTHER" id="PTHR39455:SF1">
    <property type="entry name" value="CELL DIVISION PROTEIN ZAPD"/>
    <property type="match status" value="1"/>
</dbReference>
<dbReference type="Pfam" id="PF07072">
    <property type="entry name" value="ZapD"/>
    <property type="match status" value="1"/>
</dbReference>
<dbReference type="SUPFAM" id="SSF160950">
    <property type="entry name" value="YacF-like"/>
    <property type="match status" value="1"/>
</dbReference>
<name>ZAPD_PECCP</name>
<keyword id="KW-0131">Cell cycle</keyword>
<keyword id="KW-0132">Cell division</keyword>
<keyword id="KW-0963">Cytoplasm</keyword>
<keyword id="KW-0717">Septation</keyword>
<evidence type="ECO:0000255" key="1">
    <source>
        <dbReference type="HAMAP-Rule" id="MF_01092"/>
    </source>
</evidence>